<keyword id="KW-0217">Developmental protein</keyword>
<keyword id="KW-0238">DNA-binding</keyword>
<keyword id="KW-0539">Nucleus</keyword>
<keyword id="KW-1185">Reference proteome</keyword>
<keyword id="KW-0804">Transcription</keyword>
<keyword id="KW-0805">Transcription regulation</keyword>
<reference key="1">
    <citation type="journal article" date="1997" name="Nature">
        <title>The evolution of apical dominance in maize.</title>
        <authorList>
            <person name="Doebley J."/>
            <person name="Stec A."/>
            <person name="Hubbard L."/>
        </authorList>
    </citation>
    <scope>NUCLEOTIDE SEQUENCE [MRNA]</scope>
    <scope>FUNCTION</scope>
    <scope>TISSUE SPECIFICITY</scope>
    <source>
        <strain>cv. Pioneer Inbred AP9</strain>
    </source>
</reference>
<reference key="2">
    <citation type="journal article" date="2004" name="Proc. Natl. Acad. Sci. U.S.A.">
        <title>Pattern of diversity in the genomic region near the maize domestication gene tb1.</title>
        <authorList>
            <person name="Clark R.M."/>
            <person name="Linton E."/>
            <person name="Messing J."/>
            <person name="Doebley J.F."/>
        </authorList>
    </citation>
    <scope>NUCLEOTIDE SEQUENCE [GENOMIC DNA]</scope>
    <source>
        <strain>cv. B73</strain>
    </source>
</reference>
<reference key="3">
    <citation type="journal article" date="2001" name="Proc. Natl. Acad. Sci. U.S.A.">
        <title>Structure of linkage disequilibrium and phenotypic associations in the maize genome.</title>
        <authorList>
            <person name="Remington D.L."/>
            <person name="Thornsberry J.M."/>
            <person name="Matsuoka Y."/>
            <person name="Wilson L.M."/>
            <person name="Whitt S.R."/>
            <person name="Doebley J."/>
            <person name="Kresovich S."/>
            <person name="Goodman M.M."/>
            <person name="Buckler E.S. IV"/>
        </authorList>
    </citation>
    <scope>NUCLEOTIDE SEQUENCE [LARGE SCALE GENOMIC DNA]</scope>
    <scope>VARIANTS THR-48; ALA-70; GLY-75; THR-88; THR-167; GLY-184; ASN-187; VAL-284; PRO-320; 347-GLY-GLY-348 DEL AND GLY-348 DEL</scope>
    <source>
        <strain>cv. 38-11</strain>
        <strain>cv. A441</strain>
        <strain>cv. A554</strain>
        <strain>cv. A6</strain>
        <strain>cv. A619</strain>
        <strain>cv. A632</strain>
        <strain>cv. B103</strain>
        <strain>cv. B104</strain>
        <strain>cv. B37</strain>
        <strain>cv. B68</strain>
        <strain>cv. B73</strain>
        <strain>cv. B84</strain>
        <strain>cv. B97</strain>
        <strain>cv. C103</strain>
        <strain>cv. CI187</strain>
        <strain>cv. CM105</strain>
        <strain>cv. CM174</strain>
        <strain>cv. CM7</strain>
        <strain>cv. CML10</strain>
        <strain>cv. CML247</strain>
        <strain>cv. CML254</strain>
        <strain>cv. CML258</strain>
        <strain>cv. CML261</strain>
        <strain>cv. CML277</strain>
        <strain>cv. CML281</strain>
        <strain>cv. CML287</strain>
        <strain>cv. CML333</strain>
        <strain>cv. CML5</strain>
        <strain>cv. CML61</strain>
        <strain>cv. CML91</strain>
        <strain>cv. CMV3</strain>
        <strain>cv. D940Y</strain>
        <strain>cv. F2</strain>
        <strain>cv. F2834T</strain>
        <strain>cv. F44</strain>
        <strain>cv. F7</strain>
        <strain>cv. GT112</strain>
        <strain>cv. H95</strain>
        <strain>cv. H99</strain>
        <strain>cv. I137TN</strain>
        <strain>cv. I205</strain>
        <strain>cv. I29</strain>
        <strain>cv. IA2132</strain>
        <strain>cv. IDS28</strain>
        <strain>cv. Illinois 101</strain>
        <strain>cv. Illinois 14H</strain>
        <strain>cv. Illinois 677A</strain>
        <strain>cv. K55</strain>
        <strain>cv. Kentucky 21</strain>
        <strain>cv. KUI2007</strain>
        <strain>cv. KUI21</strain>
        <strain>cv. KUI3</strain>
        <strain>cv. KUI43</strain>
        <strain>cv. KUI44</strain>
        <strain>cv. M162W</strain>
        <strain>cv. M37W</strain>
        <strain>cv. Missouri 17</strain>
        <strain>cv. Missouri 24W</strain>
        <strain>cv. MS153</strain>
        <strain>cv. N192</strain>
        <strain>cv. N28HT</strain>
        <strain>cv. ND246</strain>
        <strain>cv. North Carolina 250</strain>
        <strain>cv. North Carolina 258</strain>
        <strain>cv. North Carolina 260</strain>
        <strain>cv. North Carolina 296</strain>
        <strain>cv. North Carolina 298</strain>
        <strain>cv. North Carolina 300</strain>
        <strain>cv. North Carolina 304</strain>
        <strain>cv. North Carolina 320</strain>
        <strain>cv. North Carolina 338</strain>
        <strain>cv. North Carolina 348</strain>
        <strain>cv. North Carolina 350</strain>
        <strain>cv. North Carolina 352</strain>
        <strain>cv. North Carolina 354</strain>
        <strain>cv. Ohio 7B</strain>
        <strain>cv. P39</strain>
        <strain>cv. Q6199</strain>
        <strain>cv. SA24</strain>
        <strain>cv. SC213</strain>
        <strain>cv. SC55</strain>
        <strain>cv. SG18</strain>
        <strain>cv. Tennessee 232</strain>
        <strain>cv. Tennessee 8</strain>
        <strain>cv. Texas 601</strain>
        <strain>cv. Tzi10</strain>
        <strain>cv. Tzi18</strain>
        <strain>cv. U267Y</strain>
        <strain>cv. WF9</strain>
        <strain>cv. Wisconsin 117HT</strain>
        <strain>cv. Wisconsin 153R</strain>
        <strain>cv. Wisconsin 182B</strain>
        <strain>cv. Wisconsin 64A</strain>
    </source>
</reference>
<reference key="4">
    <citation type="journal article" date="2001" name="Proc. Natl. Acad. Sci. U.S.A.">
        <title>Patterns of DNA sequence polymorphism along chromosome 1 of maize (Zea mays ssp. mays L.).</title>
        <authorList>
            <person name="Tenaillon M.I."/>
            <person name="Sawkins M.C."/>
            <person name="Long A.D."/>
            <person name="Gaut R.L."/>
            <person name="Doebley J.F."/>
            <person name="Gaut B.S."/>
        </authorList>
    </citation>
    <scope>NUCLEOTIDE SEQUENCE [LARGE SCALE GENOMIC DNA] OF 1-309</scope>
    <scope>VARIANTS GLY-9; GLY-75; THR-88; PRO-102; ARG-119; ASN-187; SER-197; CYS-214; THR-223; PRO-242; ILE-266; VAL-284; PRO-299 AND ARG-304</scope>
    <source>
        <strain>cv. Assiniboine</strain>
        <strain>cv. B73</strain>
        <strain>cv. Bolita</strain>
        <strain>cv. Cateto Sulino</strain>
        <strain>cv. Chalqueno</strain>
        <strain>cv. Chapalote</strain>
        <strain>cv. Costeno</strain>
        <strain>cv. Cristalino Norteno</strain>
        <strain>cv. Dzit Bacal</strain>
        <strain>cv. Guirua</strain>
        <strain>cv. Kentucky 21</strain>
        <strain>cv. Missouri 17</strain>
        <strain>cv. Missouri 24W</strain>
        <strain>cv. Nal-tel</strain>
        <strain>cv. North Carolina 258</strain>
        <strain>cv. Ohio 43</strain>
        <strain>cv. Pisccorunto</strain>
        <strain>cv. Sabanero</strain>
        <strain>cv. Serrano</strain>
        <strain>cv. Tennessee 8</strain>
        <strain>cv. Texas 601</strain>
        <strain>cv. Wisconsin 153R</strain>
        <strain>cv. Zapalote Chico</strain>
    </source>
</reference>
<reference key="5">
    <citation type="journal article" date="1999" name="Nature">
        <title>The limits of selection during maize domestication.</title>
        <authorList>
            <person name="Wang R.-L."/>
            <person name="Stec A."/>
            <person name="Hey J."/>
            <person name="Lukens L."/>
            <person name="Doebley J."/>
        </authorList>
    </citation>
    <scope>NUCLEOTIDE SEQUENCE [GENOMIC DNA] OF 245-376</scope>
    <scope>VARIANTS ARG-268; VAL-284; PRO-299; 347-GLY-GLY-348 DEL AND ARG-358</scope>
    <source>
        <strain>cv. Canilla</strain>
        <strain>cv. Chapalote</strain>
        <strain>cv. Coroico</strain>
        <strain>cv. Dzit Bacal</strain>
        <strain>cv. Enano Gigante</strain>
        <strain>cv. Gehu</strain>
        <strain>cv. Maiz Dulce</strain>
        <strain>cv. Moencopi</strain>
        <strain>cv. Nal-tel</strain>
        <strain>cv. Pepetilla</strain>
        <strain>cv. Tepecintle</strain>
        <strain>cv. Wisconsin 22</strain>
    </source>
</reference>
<reference key="6">
    <citation type="journal article" date="2001" name="Nature">
        <authorList>
            <person name="Wang R.L."/>
            <person name="Stec A."/>
            <person name="Hey J."/>
            <person name="Lukens L."/>
            <person name="Doebley J."/>
        </authorList>
    </citation>
    <scope>ERRATUM OF PUBMED:10094045</scope>
</reference>
<reference key="7">
    <citation type="journal article" date="1995" name="Genetics">
        <title>teosinte branched1 and the origin of maize: evidence for epistasis and the evolution of dominance.</title>
        <authorList>
            <person name="Doebley J."/>
            <person name="Stec A."/>
            <person name="Gustus C."/>
        </authorList>
    </citation>
    <scope>FUNCTION</scope>
</reference>
<reference key="8">
    <citation type="journal article" date="2002" name="Genetics">
        <title>Expression patterns and mutant phenotype of teosinte branched1 correlate with growth suppression in maize and teosinte.</title>
        <authorList>
            <person name="Hubbard L."/>
            <person name="McSteen P."/>
            <person name="Doebley J."/>
            <person name="Hake S."/>
        </authorList>
    </citation>
    <scope>FUNCTION</scope>
    <scope>TISSUE SPECIFICITY</scope>
</reference>
<reference key="9">
    <citation type="journal article" date="2006" name="Nat. Genet.">
        <title>A distant upstream enhancer at the maize domestication gene tb1 has pleiotropic effects on plant and inflorescent architecture.</title>
        <authorList>
            <person name="Clark R.M."/>
            <person name="Wagler T.N."/>
            <person name="Quijada P."/>
            <person name="Doebley J."/>
        </authorList>
    </citation>
    <scope>FUNCTION</scope>
</reference>
<reference key="10">
    <citation type="journal article" date="2007" name="Genetics">
        <title>Major regulatory genes in maize contribute to standing variation in teosinte (Zea mays ssp. parviglumis).</title>
        <authorList>
            <person name="Weber A."/>
            <person name="Clark R.M."/>
            <person name="Vaughn L."/>
            <person name="de Jesus Sanchez-Gonzalez J."/>
            <person name="Yu J."/>
            <person name="Yandell B.S."/>
            <person name="Bradbury P."/>
            <person name="Doebley J."/>
        </authorList>
    </citation>
    <scope>FUNCTION</scope>
</reference>
<proteinExistence type="evidence at transcript level"/>
<organism>
    <name type="scientific">Zea mays</name>
    <name type="common">Maize</name>
    <dbReference type="NCBI Taxonomy" id="4577"/>
    <lineage>
        <taxon>Eukaryota</taxon>
        <taxon>Viridiplantae</taxon>
        <taxon>Streptophyta</taxon>
        <taxon>Embryophyta</taxon>
        <taxon>Tracheophyta</taxon>
        <taxon>Spermatophyta</taxon>
        <taxon>Magnoliopsida</taxon>
        <taxon>Liliopsida</taxon>
        <taxon>Poales</taxon>
        <taxon>Poaceae</taxon>
        <taxon>PACMAD clade</taxon>
        <taxon>Panicoideae</taxon>
        <taxon>Andropogonodae</taxon>
        <taxon>Andropogoneae</taxon>
        <taxon>Tripsacinae</taxon>
        <taxon>Zea</taxon>
    </lineage>
</organism>
<comment type="function">
    <text evidence="7 8 9 10 11">Transcription factor. Involved in apical dominance. Represses the growth of axillary organs (e.g. lateral branches), but enables the formation of female inflorescences. Regulates the number and length of axillary branches.</text>
</comment>
<comment type="subcellular location">
    <subcellularLocation>
        <location evidence="12">Nucleus</location>
    </subcellularLocation>
</comment>
<comment type="tissue specificity">
    <text evidence="7 11">Expressed in axillary inflorescence primordia, immature internodes below these primordia, and immature husk surrounding these primordia.</text>
</comment>
<comment type="miscellaneous">
    <text>TB1 is a major QTL of the evolution from the teosinte to the maize morphology.</text>
</comment>
<comment type="sequence caution" evidence="12">
    <conflict type="erroneous initiation">
        <sequence resource="EMBL-CDS" id="AAB53060"/>
    </conflict>
</comment>
<comment type="sequence caution" evidence="12">
    <conflict type="erroneous initiation">
        <sequence resource="EMBL-CDS" id="AAK60233"/>
    </conflict>
</comment>
<comment type="sequence caution" evidence="12">
    <conflict type="erroneous initiation">
        <sequence resource="EMBL-CDS" id="AAK60234"/>
    </conflict>
</comment>
<comment type="sequence caution" evidence="12">
    <conflict type="erroneous initiation">
        <sequence resource="EMBL-CDS" id="AAK60235"/>
    </conflict>
</comment>
<comment type="sequence caution" evidence="12">
    <conflict type="erroneous initiation">
        <sequence resource="EMBL-CDS" id="AAK60236"/>
    </conflict>
</comment>
<comment type="sequence caution" evidence="12">
    <conflict type="erroneous initiation">
        <sequence resource="EMBL-CDS" id="AAK60237"/>
    </conflict>
</comment>
<comment type="sequence caution" evidence="12">
    <conflict type="erroneous initiation">
        <sequence resource="EMBL-CDS" id="AAK60238"/>
    </conflict>
</comment>
<comment type="sequence caution" evidence="12">
    <conflict type="erroneous initiation">
        <sequence resource="EMBL-CDS" id="AAK60239"/>
    </conflict>
</comment>
<comment type="sequence caution" evidence="12">
    <conflict type="erroneous initiation">
        <sequence resource="EMBL-CDS" id="AAK60240"/>
    </conflict>
</comment>
<comment type="sequence caution" evidence="12">
    <conflict type="erroneous initiation">
        <sequence resource="EMBL-CDS" id="AAK60241"/>
    </conflict>
</comment>
<comment type="sequence caution" evidence="12">
    <conflict type="erroneous initiation">
        <sequence resource="EMBL-CDS" id="AAK60242"/>
    </conflict>
</comment>
<comment type="sequence caution" evidence="12">
    <conflict type="erroneous initiation">
        <sequence resource="EMBL-CDS" id="AAK60243"/>
    </conflict>
</comment>
<comment type="sequence caution" evidence="12">
    <conflict type="erroneous initiation">
        <sequence resource="EMBL-CDS" id="AAK60244"/>
    </conflict>
</comment>
<comment type="sequence caution" evidence="12">
    <conflict type="erroneous initiation">
        <sequence resource="EMBL-CDS" id="AAK60245"/>
    </conflict>
</comment>
<comment type="sequence caution" evidence="12">
    <conflict type="erroneous initiation">
        <sequence resource="EMBL-CDS" id="AAK60246"/>
    </conflict>
</comment>
<comment type="sequence caution" evidence="12">
    <conflict type="erroneous initiation">
        <sequence resource="EMBL-CDS" id="AAK60247"/>
    </conflict>
</comment>
<comment type="sequence caution" evidence="12">
    <conflict type="erroneous initiation">
        <sequence resource="EMBL-CDS" id="AAK60248"/>
    </conflict>
</comment>
<comment type="sequence caution" evidence="12">
    <conflict type="erroneous initiation">
        <sequence resource="EMBL-CDS" id="AAK60249"/>
    </conflict>
</comment>
<comment type="sequence caution" evidence="12">
    <conflict type="erroneous initiation">
        <sequence resource="EMBL-CDS" id="AAK60250"/>
    </conflict>
</comment>
<comment type="sequence caution" evidence="12">
    <conflict type="erroneous initiation">
        <sequence resource="EMBL-CDS" id="AAK60251"/>
    </conflict>
</comment>
<comment type="sequence caution" evidence="12">
    <conflict type="erroneous initiation">
        <sequence resource="EMBL-CDS" id="AAK60252"/>
    </conflict>
</comment>
<comment type="sequence caution" evidence="12">
    <conflict type="erroneous initiation">
        <sequence resource="EMBL-CDS" id="AAK60253"/>
    </conflict>
</comment>
<comment type="sequence caution" evidence="12">
    <conflict type="erroneous initiation">
        <sequence resource="EMBL-CDS" id="AAK60254"/>
    </conflict>
</comment>
<comment type="sequence caution" evidence="12">
    <conflict type="erroneous initiation">
        <sequence resource="EMBL-CDS" id="AAK60255"/>
    </conflict>
</comment>
<comment type="sequence caution" evidence="12">
    <conflict type="erroneous initiation">
        <sequence resource="EMBL-CDS" id="AAL17055"/>
    </conflict>
</comment>
<comment type="sequence caution" evidence="12">
    <conflict type="erroneous initiation">
        <sequence resource="EMBL-CDS" id="AAL17056"/>
    </conflict>
</comment>
<comment type="sequence caution" evidence="12">
    <conflict type="erroneous initiation">
        <sequence resource="EMBL-CDS" id="AAL17057"/>
    </conflict>
</comment>
<comment type="sequence caution" evidence="12">
    <conflict type="erroneous initiation">
        <sequence resource="EMBL-CDS" id="AAL17058"/>
    </conflict>
</comment>
<comment type="sequence caution" evidence="12">
    <conflict type="erroneous initiation">
        <sequence resource="EMBL-CDS" id="AAL17059"/>
    </conflict>
</comment>
<comment type="sequence caution" evidence="12">
    <conflict type="erroneous initiation">
        <sequence resource="EMBL-CDS" id="AAL17060"/>
    </conflict>
</comment>
<comment type="sequence caution" evidence="12">
    <conflict type="erroneous initiation">
        <sequence resource="EMBL-CDS" id="AAL17061"/>
    </conflict>
</comment>
<comment type="sequence caution" evidence="12">
    <conflict type="erroneous initiation">
        <sequence resource="EMBL-CDS" id="AAL17062"/>
    </conflict>
</comment>
<comment type="sequence caution" evidence="12">
    <conflict type="erroneous initiation">
        <sequence resource="EMBL-CDS" id="AAL17063"/>
    </conflict>
</comment>
<comment type="sequence caution" evidence="12">
    <conflict type="erroneous initiation">
        <sequence resource="EMBL-CDS" id="AAL17064"/>
    </conflict>
</comment>
<comment type="sequence caution" evidence="12">
    <conflict type="erroneous initiation">
        <sequence resource="EMBL-CDS" id="AAL17065"/>
    </conflict>
</comment>
<comment type="sequence caution" evidence="12">
    <conflict type="erroneous initiation">
        <sequence resource="EMBL-CDS" id="AAL17066"/>
    </conflict>
</comment>
<comment type="sequence caution" evidence="12">
    <conflict type="erroneous initiation">
        <sequence resource="EMBL-CDS" id="AAL17067"/>
    </conflict>
</comment>
<comment type="sequence caution" evidence="12">
    <conflict type="erroneous initiation">
        <sequence resource="EMBL-CDS" id="AAL17068"/>
    </conflict>
</comment>
<comment type="sequence caution" evidence="12">
    <conflict type="erroneous initiation">
        <sequence resource="EMBL-CDS" id="AAL17069"/>
    </conflict>
</comment>
<comment type="sequence caution" evidence="12">
    <conflict type="erroneous initiation">
        <sequence resource="EMBL-CDS" id="AAL17070"/>
    </conflict>
</comment>
<comment type="sequence caution" evidence="12">
    <conflict type="erroneous initiation">
        <sequence resource="EMBL-CDS" id="AAL17071"/>
    </conflict>
</comment>
<comment type="sequence caution" evidence="12">
    <conflict type="erroneous initiation">
        <sequence resource="EMBL-CDS" id="AAL17072"/>
    </conflict>
</comment>
<comment type="sequence caution" evidence="12">
    <conflict type="erroneous initiation">
        <sequence resource="EMBL-CDS" id="AAL17073"/>
    </conflict>
</comment>
<comment type="sequence caution" evidence="12">
    <conflict type="erroneous initiation">
        <sequence resource="EMBL-CDS" id="AAL17074"/>
    </conflict>
</comment>
<comment type="sequence caution" evidence="12">
    <conflict type="erroneous initiation">
        <sequence resource="EMBL-CDS" id="AAL17075"/>
    </conflict>
</comment>
<comment type="sequence caution" evidence="12">
    <conflict type="erroneous initiation">
        <sequence resource="EMBL-CDS" id="AAL17076"/>
    </conflict>
</comment>
<comment type="sequence caution" evidence="12">
    <conflict type="erroneous initiation">
        <sequence resource="EMBL-CDS" id="AAL17077"/>
    </conflict>
</comment>
<comment type="sequence caution" evidence="12">
    <conflict type="erroneous initiation">
        <sequence resource="EMBL-CDS" id="AAL17078"/>
    </conflict>
</comment>
<comment type="sequence caution" evidence="12">
    <conflict type="erroneous initiation">
        <sequence resource="EMBL-CDS" id="AAL17079"/>
    </conflict>
</comment>
<comment type="sequence caution" evidence="12">
    <conflict type="erroneous initiation">
        <sequence resource="EMBL-CDS" id="AAL17080"/>
    </conflict>
</comment>
<comment type="sequence caution" evidence="12">
    <conflict type="erroneous initiation">
        <sequence resource="EMBL-CDS" id="AAL17081"/>
    </conflict>
</comment>
<comment type="sequence caution" evidence="12">
    <conflict type="erroneous initiation">
        <sequence resource="EMBL-CDS" id="AAL17082"/>
    </conflict>
</comment>
<comment type="sequence caution" evidence="12">
    <conflict type="erroneous initiation">
        <sequence resource="EMBL-CDS" id="AAL17083"/>
    </conflict>
</comment>
<comment type="sequence caution" evidence="12">
    <conflict type="erroneous initiation">
        <sequence resource="EMBL-CDS" id="AAL17084"/>
    </conflict>
</comment>
<comment type="sequence caution" evidence="12">
    <conflict type="erroneous initiation">
        <sequence resource="EMBL-CDS" id="AAL17085"/>
    </conflict>
</comment>
<comment type="sequence caution" evidence="12">
    <conflict type="erroneous initiation">
        <sequence resource="EMBL-CDS" id="AAL17086"/>
    </conflict>
</comment>
<comment type="sequence caution" evidence="12">
    <conflict type="erroneous initiation">
        <sequence resource="EMBL-CDS" id="AAL17087"/>
    </conflict>
</comment>
<comment type="sequence caution" evidence="12">
    <conflict type="erroneous initiation">
        <sequence resource="EMBL-CDS" id="AAL17088"/>
    </conflict>
</comment>
<comment type="sequence caution" evidence="12">
    <conflict type="erroneous initiation">
        <sequence resource="EMBL-CDS" id="AAL17089"/>
    </conflict>
</comment>
<comment type="sequence caution" evidence="12">
    <conflict type="erroneous initiation">
        <sequence resource="EMBL-CDS" id="AAL17090"/>
    </conflict>
</comment>
<comment type="sequence caution" evidence="12">
    <conflict type="erroneous initiation">
        <sequence resource="EMBL-CDS" id="AAL17091"/>
    </conflict>
</comment>
<comment type="sequence caution" evidence="12">
    <conflict type="erroneous initiation">
        <sequence resource="EMBL-CDS" id="AAL17092"/>
    </conflict>
</comment>
<comment type="sequence caution" evidence="12">
    <conflict type="erroneous initiation">
        <sequence resource="EMBL-CDS" id="AAL17093"/>
    </conflict>
</comment>
<comment type="sequence caution" evidence="12">
    <conflict type="erroneous initiation">
        <sequence resource="EMBL-CDS" id="AAL17094"/>
    </conflict>
</comment>
<comment type="sequence caution" evidence="12">
    <conflict type="erroneous initiation">
        <sequence resource="EMBL-CDS" id="AAL17095"/>
    </conflict>
</comment>
<comment type="sequence caution" evidence="12">
    <conflict type="erroneous initiation">
        <sequence resource="EMBL-CDS" id="AAL17096"/>
    </conflict>
</comment>
<comment type="sequence caution" evidence="12">
    <conflict type="erroneous initiation">
        <sequence resource="EMBL-CDS" id="AAL17097"/>
    </conflict>
</comment>
<comment type="sequence caution" evidence="12">
    <conflict type="erroneous initiation">
        <sequence resource="EMBL-CDS" id="AAL17098"/>
    </conflict>
</comment>
<comment type="sequence caution" evidence="12">
    <conflict type="erroneous initiation">
        <sequence resource="EMBL-CDS" id="AAL17099"/>
    </conflict>
</comment>
<comment type="sequence caution" evidence="12">
    <conflict type="erroneous initiation">
        <sequence resource="EMBL-CDS" id="AAL17100"/>
    </conflict>
</comment>
<comment type="sequence caution" evidence="12">
    <conflict type="erroneous initiation">
        <sequence resource="EMBL-CDS" id="AAL17101"/>
    </conflict>
</comment>
<comment type="sequence caution" evidence="12">
    <conflict type="erroneous initiation">
        <sequence resource="EMBL-CDS" id="AAL17102"/>
    </conflict>
</comment>
<comment type="sequence caution" evidence="12">
    <conflict type="erroneous initiation">
        <sequence resource="EMBL-CDS" id="AAL17103"/>
    </conflict>
</comment>
<comment type="sequence caution" evidence="12">
    <conflict type="erroneous initiation">
        <sequence resource="EMBL-CDS" id="AAL17104"/>
    </conflict>
</comment>
<comment type="sequence caution" evidence="12">
    <conflict type="erroneous initiation">
        <sequence resource="EMBL-CDS" id="AAL17105"/>
    </conflict>
</comment>
<comment type="sequence caution" evidence="12">
    <conflict type="erroneous initiation">
        <sequence resource="EMBL-CDS" id="AAL17106"/>
    </conflict>
</comment>
<comment type="sequence caution" evidence="12">
    <conflict type="erroneous initiation">
        <sequence resource="EMBL-CDS" id="AAL17107"/>
    </conflict>
</comment>
<comment type="sequence caution" evidence="12">
    <conflict type="erroneous initiation">
        <sequence resource="EMBL-CDS" id="AAL17108"/>
    </conflict>
</comment>
<comment type="sequence caution" evidence="12">
    <conflict type="erroneous initiation">
        <sequence resource="EMBL-CDS" id="AAL17109"/>
    </conflict>
</comment>
<comment type="sequence caution" evidence="12">
    <conflict type="erroneous initiation">
        <sequence resource="EMBL-CDS" id="AAL17110"/>
    </conflict>
</comment>
<comment type="sequence caution" evidence="12">
    <conflict type="erroneous initiation">
        <sequence resource="EMBL-CDS" id="AAL17111"/>
    </conflict>
</comment>
<comment type="sequence caution" evidence="12">
    <conflict type="erroneous initiation">
        <sequence resource="EMBL-CDS" id="AAL17112"/>
    </conflict>
</comment>
<comment type="sequence caution" evidence="12">
    <conflict type="erroneous initiation">
        <sequence resource="EMBL-CDS" id="AAL17113"/>
    </conflict>
</comment>
<comment type="sequence caution" evidence="12">
    <conflict type="erroneous initiation">
        <sequence resource="EMBL-CDS" id="AAL17114"/>
    </conflict>
</comment>
<comment type="sequence caution" evidence="12">
    <conflict type="erroneous initiation">
        <sequence resource="EMBL-CDS" id="AAL17115"/>
    </conflict>
</comment>
<comment type="sequence caution" evidence="12">
    <conflict type="erroneous initiation">
        <sequence resource="EMBL-CDS" id="AAL17116"/>
    </conflict>
</comment>
<comment type="sequence caution" evidence="12">
    <conflict type="erroneous initiation">
        <sequence resource="EMBL-CDS" id="AAL17117"/>
    </conflict>
</comment>
<comment type="sequence caution" evidence="12">
    <conflict type="erroneous initiation">
        <sequence resource="EMBL-CDS" id="AAL17118"/>
    </conflict>
</comment>
<comment type="sequence caution" evidence="12">
    <conflict type="erroneous initiation">
        <sequence resource="EMBL-CDS" id="AAL17119"/>
    </conflict>
</comment>
<comment type="sequence caution" evidence="12">
    <conflict type="erroneous initiation">
        <sequence resource="EMBL-CDS" id="AAL17120"/>
    </conflict>
</comment>
<comment type="sequence caution" evidence="12">
    <conflict type="erroneous initiation">
        <sequence resource="EMBL-CDS" id="AAL17121"/>
    </conflict>
</comment>
<comment type="sequence caution" evidence="12">
    <conflict type="erroneous initiation">
        <sequence resource="EMBL-CDS" id="AAL17122"/>
    </conflict>
</comment>
<comment type="sequence caution" evidence="12">
    <conflict type="erroneous initiation">
        <sequence resource="EMBL-CDS" id="AAL17123"/>
    </conflict>
</comment>
<comment type="sequence caution" evidence="12">
    <conflict type="erroneous initiation">
        <sequence resource="EMBL-CDS" id="AAL17124"/>
    </conflict>
</comment>
<comment type="sequence caution" evidence="12">
    <conflict type="erroneous initiation">
        <sequence resource="EMBL-CDS" id="AAL17125"/>
    </conflict>
</comment>
<comment type="sequence caution" evidence="12">
    <conflict type="erroneous initiation">
        <sequence resource="EMBL-CDS" id="AAL17126"/>
    </conflict>
</comment>
<comment type="sequence caution" evidence="12">
    <conflict type="erroneous initiation">
        <sequence resource="EMBL-CDS" id="AAL17127"/>
    </conflict>
</comment>
<comment type="sequence caution" evidence="12">
    <conflict type="erroneous initiation">
        <sequence resource="EMBL-CDS" id="AAL17128"/>
    </conflict>
</comment>
<comment type="sequence caution" evidence="12">
    <conflict type="erroneous initiation">
        <sequence resource="EMBL-CDS" id="AAL17129"/>
    </conflict>
</comment>
<comment type="sequence caution" evidence="12">
    <conflict type="erroneous initiation">
        <sequence resource="EMBL-CDS" id="AAL17130"/>
    </conflict>
</comment>
<comment type="sequence caution" evidence="12">
    <conflict type="erroneous initiation">
        <sequence resource="EMBL-CDS" id="AAL17131"/>
    </conflict>
</comment>
<comment type="sequence caution" evidence="12">
    <conflict type="erroneous initiation">
        <sequence resource="EMBL-CDS" id="AAL17132"/>
    </conflict>
</comment>
<comment type="sequence caution" evidence="12">
    <conflict type="erroneous initiation">
        <sequence resource="EMBL-CDS" id="AAL17133"/>
    </conflict>
</comment>
<comment type="sequence caution" evidence="12">
    <conflict type="erroneous initiation">
        <sequence resource="EMBL-CDS" id="AAL17134"/>
    </conflict>
</comment>
<comment type="sequence caution" evidence="12">
    <conflict type="erroneous initiation">
        <sequence resource="EMBL-CDS" id="AAL17135"/>
    </conflict>
</comment>
<comment type="sequence caution" evidence="12">
    <conflict type="erroneous initiation">
        <sequence resource="EMBL-CDS" id="AAL17136"/>
    </conflict>
</comment>
<comment type="sequence caution" evidence="12">
    <conflict type="erroneous initiation">
        <sequence resource="EMBL-CDS" id="AAL17137"/>
    </conflict>
</comment>
<comment type="sequence caution" evidence="12">
    <conflict type="erroneous initiation">
        <sequence resource="EMBL-CDS" id="AAL17138"/>
    </conflict>
</comment>
<comment type="sequence caution" evidence="12">
    <conflict type="erroneous initiation">
        <sequence resource="EMBL-CDS" id="AAL17139"/>
    </conflict>
</comment>
<comment type="sequence caution" evidence="12">
    <conflict type="erroneous initiation">
        <sequence resource="EMBL-CDS" id="AAL17140"/>
    </conflict>
</comment>
<comment type="sequence caution" evidence="12">
    <conflict type="erroneous initiation">
        <sequence resource="EMBL-CDS" id="AAL17141"/>
    </conflict>
</comment>
<comment type="sequence caution" evidence="12">
    <conflict type="erroneous initiation">
        <sequence resource="EMBL-CDS" id="AAL17142"/>
    </conflict>
</comment>
<comment type="sequence caution" evidence="12">
    <conflict type="erroneous initiation">
        <sequence resource="EMBL-CDS" id="AAL17143"/>
    </conflict>
</comment>
<comment type="sequence caution" evidence="12">
    <conflict type="erroneous initiation">
        <sequence resource="EMBL-CDS" id="AAL17144"/>
    </conflict>
</comment>
<comment type="sequence caution" evidence="12">
    <conflict type="erroneous initiation">
        <sequence resource="EMBL-CDS" id="AAL17145"/>
    </conflict>
</comment>
<comment type="sequence caution" evidence="12">
    <conflict type="erroneous initiation">
        <sequence resource="EMBL-CDS" id="AAL17146"/>
    </conflict>
</comment>
<comment type="sequence caution" evidence="12">
    <conflict type="erroneous initiation">
        <sequence resource="EMBL-CDS" id="AAL17147"/>
    </conflict>
</comment>
<comment type="sequence caution" evidence="12">
    <conflict type="erroneous initiation">
        <sequence resource="EMBL-CDS" id="AAL66761"/>
    </conflict>
</comment>
<evidence type="ECO:0000255" key="1">
    <source>
        <dbReference type="PROSITE-ProRule" id="PRU00701"/>
    </source>
</evidence>
<evidence type="ECO:0000255" key="2">
    <source>
        <dbReference type="PROSITE-ProRule" id="PRU00702"/>
    </source>
</evidence>
<evidence type="ECO:0000256" key="3">
    <source>
        <dbReference type="SAM" id="MobiDB-lite"/>
    </source>
</evidence>
<evidence type="ECO:0000269" key="4">
    <source>
    </source>
</evidence>
<evidence type="ECO:0000269" key="5">
    <source>
    </source>
</evidence>
<evidence type="ECO:0000269" key="6">
    <source>
    </source>
</evidence>
<evidence type="ECO:0000269" key="7">
    <source>
    </source>
</evidence>
<evidence type="ECO:0000269" key="8">
    <source>
    </source>
</evidence>
<evidence type="ECO:0000269" key="9">
    <source>
    </source>
</evidence>
<evidence type="ECO:0000269" key="10">
    <source>
    </source>
</evidence>
<evidence type="ECO:0000269" key="11">
    <source>
    </source>
</evidence>
<evidence type="ECO:0000305" key="12"/>
<sequence length="376" mass="39856">MFPFCDSSSPMDLPLYQQLQLSPSSPKTDQSSSFYCYPCSPPFAAADASFPLSYQIGSAAAADATPPQAVINSPDLPVQALMDHAPAPATELGACASGAEGSGASLDRAAAAARKDRHSKICTAGGMRDRRMRLSLDVARKFFALQDMLGFDKASKTVQWLLNTSKSAIQEIMADDASSECVEDGSSSLSVDGKHNPAEQLGGGGDQKPKGNCRGEGKKPAKASKAAATPKPPRKSANNAHQVPDKETRAKARERARERTKEKHRMRWVKLASAIDVEAAAASGPSDRPSSNNLSHHSSLSMNMPCAAAELEERERCSSALSNRSAGRMQEITGASDVVLGFGNGGGGYGDGGGNYYCQEQWELGGVVFQQNSRFY</sequence>
<accession>Q93WI2</accession>
<accession>O04170</accession>
<accession>Q8W0X2</accession>
<accession>Q93V44</accession>
<accession>Q93W12</accession>
<accession>Q93WE3</accession>
<accession>Q93WI5</accession>
<accession>Q93WK1</accession>
<accession>Q93WL2</accession>
<accession>Q945F8</accession>
<accession>Q945F9</accession>
<accession>Q945G0</accession>
<accession>Q945G1</accession>
<accession>Q945G2</accession>
<accession>Q945G3</accession>
<accession>Q945G4</accession>
<accession>Q94FD2</accession>
<accession>Q94FD3</accession>
<accession>Q94FD4</accession>
<accession>Q94FD5</accession>
<accession>Q94FD6</accession>
<accession>Q94FD7</accession>
<accession>Q94FD8</accession>
<accession>Q94FD9</accession>
<accession>Q94FE0</accession>
<accession>Q94FE1</accession>
<accession>Q94FE2</accession>
<accession>Q94FE3</accession>
<accession>Q94FE4</accession>
<accession>Q9AR16</accession>
<accession>Q9AT82</accession>
<accession>Q9AT83</accession>
<accession>Q9AT84</accession>
<accession>Q9AT85</accession>
<gene>
    <name type="primary">TB1</name>
    <name type="ORF">Z178A11.18</name>
</gene>
<feature type="chain" id="PRO_0000330799" description="Transcription factor TEOSINTE BRANCHED 1">
    <location>
        <begin position="1"/>
        <end position="376"/>
    </location>
</feature>
<feature type="domain" description="TCP" evidence="1">
    <location>
        <begin position="114"/>
        <end position="172"/>
    </location>
</feature>
<feature type="domain" description="R" evidence="2">
    <location>
        <begin position="246"/>
        <end position="263"/>
    </location>
</feature>
<feature type="region of interest" description="Disordered" evidence="3">
    <location>
        <begin position="179"/>
        <end position="266"/>
    </location>
</feature>
<feature type="region of interest" description="Disordered" evidence="3">
    <location>
        <begin position="280"/>
        <end position="299"/>
    </location>
</feature>
<feature type="compositionally biased region" description="Basic and acidic residues" evidence="3">
    <location>
        <begin position="207"/>
        <end position="219"/>
    </location>
</feature>
<feature type="compositionally biased region" description="Basic and acidic residues" evidence="3">
    <location>
        <begin position="243"/>
        <end position="261"/>
    </location>
</feature>
<feature type="compositionally biased region" description="Low complexity" evidence="3">
    <location>
        <begin position="290"/>
        <end position="299"/>
    </location>
</feature>
<feature type="sequence variant" description="In strain: cv. Dzit Bacal." evidence="5">
    <original>S</original>
    <variation>G</variation>
    <location>
        <position position="9"/>
    </location>
</feature>
<feature type="sequence variant" description="In strain: cv. D940Y and cv. M37W." evidence="6">
    <original>A</original>
    <variation>T</variation>
    <location>
        <position position="48"/>
    </location>
</feature>
<feature type="sequence variant" description="In strain: cv. CML247." evidence="6">
    <original>V</original>
    <variation>A</variation>
    <location>
        <position position="70"/>
    </location>
</feature>
<feature type="sequence variant" description="In strain: cv. Missouri 17." evidence="5 6">
    <original>D</original>
    <variation>G</variation>
    <location>
        <position position="75"/>
    </location>
</feature>
<feature type="sequence variant" description="In strain: cv. I29, cv. Illinois 101, cv. Illinois 14H, cv. P39 and cv. Tennessee 8." evidence="5 6">
    <original>P</original>
    <variation>T</variation>
    <location>
        <position position="88"/>
    </location>
</feature>
<feature type="sequence variant" description="In strain: cv. Nal-tel." evidence="5">
    <original>S</original>
    <variation>P</variation>
    <location>
        <position position="102"/>
    </location>
</feature>
<feature type="sequence variant" description="In strain: cv. Costeno." evidence="5">
    <original>S</original>
    <variation>R</variation>
    <location>
        <position position="119"/>
    </location>
</feature>
<feature type="sequence variant" description="In strain: cv. CML61." evidence="6">
    <original>S</original>
    <variation>T</variation>
    <location>
        <position position="167"/>
    </location>
</feature>
<feature type="sequence variant" description="In strain: cv. CML247." evidence="6">
    <original>D</original>
    <variation>G</variation>
    <location>
        <position position="184"/>
    </location>
</feature>
<feature type="sequence variant" description="In strain: cv. Assiniboine and cv. Missouri 17." evidence="5 6">
    <original>S</original>
    <variation>N</variation>
    <location>
        <position position="187"/>
    </location>
</feature>
<feature type="sequence variant" description="In strain: cv. Sabanero." evidence="5">
    <original>P</original>
    <variation>S</variation>
    <location>
        <position position="197"/>
    </location>
</feature>
<feature type="sequence variant" description="In strain: cv. Chapalote." evidence="5">
    <original>R</original>
    <variation>C</variation>
    <location>
        <position position="214"/>
    </location>
</feature>
<feature type="sequence variant" description="In strain: cv. Guirua." evidence="5">
    <original>A</original>
    <variation>T</variation>
    <location>
        <position position="223"/>
    </location>
</feature>
<feature type="sequence variant" description="In strain: cv. Chapalote." evidence="5">
    <original>Q</original>
    <variation>P</variation>
    <location>
        <position position="242"/>
    </location>
</feature>
<feature type="sequence variant" description="In strain: cv. Sabanero." evidence="5">
    <original>M</original>
    <variation>I</variation>
    <location>
        <position position="266"/>
    </location>
</feature>
<feature type="sequence variant" description="In strain: cv. Gehu." evidence="4">
    <original>W</original>
    <variation>R</variation>
    <location>
        <position position="268"/>
    </location>
</feature>
<feature type="sequence variant" description="In strain: cv. A619, cv. B103, cv. F2, cv. H95, cv. H99, cv. Illinois 677A, cv. Moencopi, cv. North Carolina 260, cv. North Carolina 338, cv. Ohio 43, cv. Pioneer Inbred AP9, cv. U267Y, cv. W64A and cv. WF9." evidence="4 5 6">
    <original>G</original>
    <variation>V</variation>
    <location>
        <position position="284"/>
    </location>
</feature>
<feature type="sequence variant" description="In strain: cv. Dzit Bacal." evidence="4 5">
    <original>S</original>
    <variation>P</variation>
    <location>
        <position position="299"/>
    </location>
</feature>
<feature type="sequence variant" description="In strain: cv. Cateto Sulino." evidence="5">
    <original>M</original>
    <variation>R</variation>
    <location>
        <position position="304"/>
    </location>
</feature>
<feature type="sequence variant" description="In strain: cv. Illinois 101, cv. Illinois 14H, cv. MS153, cv. P39 and cv. Tennessee 8." evidence="6">
    <original>A</original>
    <variation>P</variation>
    <location>
        <position position="320"/>
    </location>
</feature>
<feature type="sequence variant" description="In strain: cv. A619, cv. B103, cv. Chapalote, cv. CM7, cv. F2, cv. H95, cv. H99, cv. Moencopi, cv. North Carolina 260, cv. Pioneer Inbred AP9, cv. U267Y, cv. W64A and cv. WF9." evidence="4 6">
    <location>
        <begin position="347"/>
        <end position="348"/>
    </location>
</feature>
<feature type="sequence variant" description="In strain: cv. KUI2007, cv. KUI3 and cv. Q6199." evidence="6">
    <location>
        <position position="348"/>
    </location>
</feature>
<feature type="sequence variant" description="In strain: cv. Canilla." evidence="4">
    <original>C</original>
    <variation>R</variation>
    <location>
        <position position="358"/>
    </location>
</feature>
<feature type="sequence conflict" description="In Ref. 4; AAK60247." evidence="12" ref="4">
    <original>K</original>
    <variation>R</variation>
    <location>
        <position position="153"/>
    </location>
</feature>
<feature type="sequence conflict" description="In Ref. 4; AAK60255." evidence="12" ref="4">
    <original>S</original>
    <variation>G</variation>
    <location>
        <position position="286"/>
    </location>
</feature>
<dbReference type="EMBL" id="U94494">
    <property type="protein sequence ID" value="AAB53060.1"/>
    <property type="status" value="ALT_INIT"/>
    <property type="molecule type" value="mRNA"/>
</dbReference>
<dbReference type="EMBL" id="AF464738">
    <property type="protein sequence ID" value="AAL66761.1"/>
    <property type="status" value="ALT_INIT"/>
    <property type="molecule type" value="Genomic_DNA"/>
</dbReference>
<dbReference type="EMBL" id="AF415024">
    <property type="protein sequence ID" value="AAL17055.1"/>
    <property type="status" value="ALT_INIT"/>
    <property type="molecule type" value="Genomic_DNA"/>
</dbReference>
<dbReference type="EMBL" id="AF415027">
    <property type="protein sequence ID" value="AAL17056.1"/>
    <property type="status" value="ALT_INIT"/>
    <property type="molecule type" value="Genomic_DNA"/>
</dbReference>
<dbReference type="EMBL" id="AF415029">
    <property type="protein sequence ID" value="AAL17057.1"/>
    <property type="status" value="ALT_INIT"/>
    <property type="molecule type" value="Genomic_DNA"/>
</dbReference>
<dbReference type="EMBL" id="AF415030">
    <property type="protein sequence ID" value="AAL17058.1"/>
    <property type="status" value="ALT_INIT"/>
    <property type="molecule type" value="Genomic_DNA"/>
</dbReference>
<dbReference type="EMBL" id="AF415031">
    <property type="protein sequence ID" value="AAL17059.1"/>
    <property type="status" value="ALT_INIT"/>
    <property type="molecule type" value="Genomic_DNA"/>
</dbReference>
<dbReference type="EMBL" id="AF415032">
    <property type="protein sequence ID" value="AAL17060.1"/>
    <property type="status" value="ALT_INIT"/>
    <property type="molecule type" value="Genomic_DNA"/>
</dbReference>
<dbReference type="EMBL" id="AF415033">
    <property type="protein sequence ID" value="AAL17061.1"/>
    <property type="status" value="ALT_INIT"/>
    <property type="molecule type" value="Genomic_DNA"/>
</dbReference>
<dbReference type="EMBL" id="AF415034">
    <property type="protein sequence ID" value="AAL17062.1"/>
    <property type="status" value="ALT_INIT"/>
    <property type="molecule type" value="Genomic_DNA"/>
</dbReference>
<dbReference type="EMBL" id="AF415036">
    <property type="protein sequence ID" value="AAL17063.1"/>
    <property type="status" value="ALT_INIT"/>
    <property type="molecule type" value="Genomic_DNA"/>
</dbReference>
<dbReference type="EMBL" id="AF415037">
    <property type="protein sequence ID" value="AAL17064.1"/>
    <property type="status" value="ALT_INIT"/>
    <property type="molecule type" value="Genomic_DNA"/>
</dbReference>
<dbReference type="EMBL" id="AF415039">
    <property type="protein sequence ID" value="AAL17065.1"/>
    <property type="status" value="ALT_INIT"/>
    <property type="molecule type" value="Genomic_DNA"/>
</dbReference>
<dbReference type="EMBL" id="AF415041">
    <property type="protein sequence ID" value="AAL17066.1"/>
    <property type="status" value="ALT_INIT"/>
    <property type="molecule type" value="Genomic_DNA"/>
</dbReference>
<dbReference type="EMBL" id="AF415042">
    <property type="protein sequence ID" value="AAL17067.1"/>
    <property type="status" value="ALT_INIT"/>
    <property type="molecule type" value="Genomic_DNA"/>
</dbReference>
<dbReference type="EMBL" id="AF415043">
    <property type="protein sequence ID" value="AAL17068.1"/>
    <property type="status" value="ALT_INIT"/>
    <property type="molecule type" value="Genomic_DNA"/>
</dbReference>
<dbReference type="EMBL" id="AF415044">
    <property type="protein sequence ID" value="AAL17069.1"/>
    <property type="status" value="ALT_INIT"/>
    <property type="molecule type" value="Genomic_DNA"/>
</dbReference>
<dbReference type="EMBL" id="AF415045">
    <property type="protein sequence ID" value="AAL17070.1"/>
    <property type="status" value="ALT_INIT"/>
    <property type="molecule type" value="Genomic_DNA"/>
</dbReference>
<dbReference type="EMBL" id="AF415046">
    <property type="protein sequence ID" value="AAL17071.1"/>
    <property type="status" value="ALT_INIT"/>
    <property type="molecule type" value="Genomic_DNA"/>
</dbReference>
<dbReference type="EMBL" id="AF415048">
    <property type="protein sequence ID" value="AAL17072.1"/>
    <property type="status" value="ALT_INIT"/>
    <property type="molecule type" value="Genomic_DNA"/>
</dbReference>
<dbReference type="EMBL" id="AF415049">
    <property type="protein sequence ID" value="AAL17073.1"/>
    <property type="status" value="ALT_INIT"/>
    <property type="molecule type" value="Genomic_DNA"/>
</dbReference>
<dbReference type="EMBL" id="AF415050">
    <property type="protein sequence ID" value="AAL17074.1"/>
    <property type="status" value="ALT_INIT"/>
    <property type="molecule type" value="Genomic_DNA"/>
</dbReference>
<dbReference type="EMBL" id="AF415052">
    <property type="protein sequence ID" value="AAL17075.1"/>
    <property type="status" value="ALT_INIT"/>
    <property type="molecule type" value="Genomic_DNA"/>
</dbReference>
<dbReference type="EMBL" id="AF415054">
    <property type="protein sequence ID" value="AAL17076.1"/>
    <property type="status" value="ALT_INIT"/>
    <property type="molecule type" value="Genomic_DNA"/>
</dbReference>
<dbReference type="EMBL" id="AF415055">
    <property type="protein sequence ID" value="AAL17077.1"/>
    <property type="status" value="ALT_INIT"/>
    <property type="molecule type" value="Genomic_DNA"/>
</dbReference>
<dbReference type="EMBL" id="AF415056">
    <property type="protein sequence ID" value="AAL17078.1"/>
    <property type="status" value="ALT_INIT"/>
    <property type="molecule type" value="Genomic_DNA"/>
</dbReference>
<dbReference type="EMBL" id="AF415057">
    <property type="protein sequence ID" value="AAL17079.1"/>
    <property type="status" value="ALT_INIT"/>
    <property type="molecule type" value="Genomic_DNA"/>
</dbReference>
<dbReference type="EMBL" id="AF415058">
    <property type="protein sequence ID" value="AAL17080.1"/>
    <property type="status" value="ALT_INIT"/>
    <property type="molecule type" value="Genomic_DNA"/>
</dbReference>
<dbReference type="EMBL" id="AF415059">
    <property type="protein sequence ID" value="AAL17081.1"/>
    <property type="status" value="ALT_INIT"/>
    <property type="molecule type" value="Genomic_DNA"/>
</dbReference>
<dbReference type="EMBL" id="AF415061">
    <property type="protein sequence ID" value="AAL17082.1"/>
    <property type="status" value="ALT_INIT"/>
    <property type="molecule type" value="Genomic_DNA"/>
</dbReference>
<dbReference type="EMBL" id="AF415063">
    <property type="protein sequence ID" value="AAL17083.1"/>
    <property type="status" value="ALT_INIT"/>
    <property type="molecule type" value="Genomic_DNA"/>
</dbReference>
<dbReference type="EMBL" id="AF415064">
    <property type="protein sequence ID" value="AAL17084.1"/>
    <property type="status" value="ALT_INIT"/>
    <property type="molecule type" value="Genomic_DNA"/>
</dbReference>
<dbReference type="EMBL" id="AF415066">
    <property type="protein sequence ID" value="AAL17085.1"/>
    <property type="status" value="ALT_INIT"/>
    <property type="molecule type" value="Genomic_DNA"/>
</dbReference>
<dbReference type="EMBL" id="AF415068">
    <property type="protein sequence ID" value="AAL17086.1"/>
    <property type="status" value="ALT_INIT"/>
    <property type="molecule type" value="Genomic_DNA"/>
</dbReference>
<dbReference type="EMBL" id="AF415070">
    <property type="protein sequence ID" value="AAL17087.1"/>
    <property type="status" value="ALT_INIT"/>
    <property type="molecule type" value="Genomic_DNA"/>
</dbReference>
<dbReference type="EMBL" id="AF415071">
    <property type="protein sequence ID" value="AAL17088.1"/>
    <property type="status" value="ALT_INIT"/>
    <property type="molecule type" value="Genomic_DNA"/>
</dbReference>
<dbReference type="EMBL" id="AF415072">
    <property type="protein sequence ID" value="AAL17089.1"/>
    <property type="status" value="ALT_INIT"/>
    <property type="molecule type" value="Genomic_DNA"/>
</dbReference>
<dbReference type="EMBL" id="AF415074">
    <property type="protein sequence ID" value="AAL17090.1"/>
    <property type="status" value="ALT_INIT"/>
    <property type="molecule type" value="Genomic_DNA"/>
</dbReference>
<dbReference type="EMBL" id="AF415075">
    <property type="protein sequence ID" value="AAL17091.1"/>
    <property type="status" value="ALT_INIT"/>
    <property type="molecule type" value="Genomic_DNA"/>
</dbReference>
<dbReference type="EMBL" id="AF415076">
    <property type="protein sequence ID" value="AAL17092.1"/>
    <property type="status" value="ALT_INIT"/>
    <property type="molecule type" value="Genomic_DNA"/>
</dbReference>
<dbReference type="EMBL" id="AF415077">
    <property type="protein sequence ID" value="AAL17093.1"/>
    <property type="status" value="ALT_INIT"/>
    <property type="molecule type" value="Genomic_DNA"/>
</dbReference>
<dbReference type="EMBL" id="AF415079">
    <property type="protein sequence ID" value="AAL17094.1"/>
    <property type="status" value="ALT_INIT"/>
    <property type="molecule type" value="Genomic_DNA"/>
</dbReference>
<dbReference type="EMBL" id="AF415080">
    <property type="protein sequence ID" value="AAL17095.1"/>
    <property type="status" value="ALT_INIT"/>
    <property type="molecule type" value="Genomic_DNA"/>
</dbReference>
<dbReference type="EMBL" id="AF415081">
    <property type="protein sequence ID" value="AAL17096.1"/>
    <property type="status" value="ALT_INIT"/>
    <property type="molecule type" value="Genomic_DNA"/>
</dbReference>
<dbReference type="EMBL" id="AF415083">
    <property type="protein sequence ID" value="AAL17097.1"/>
    <property type="status" value="ALT_INIT"/>
    <property type="molecule type" value="Genomic_DNA"/>
</dbReference>
<dbReference type="EMBL" id="AF415085">
    <property type="protein sequence ID" value="AAL17098.1"/>
    <property type="status" value="ALT_INIT"/>
    <property type="molecule type" value="Genomic_DNA"/>
</dbReference>
<dbReference type="EMBL" id="AF415086">
    <property type="protein sequence ID" value="AAL17099.1"/>
    <property type="status" value="ALT_INIT"/>
    <property type="molecule type" value="Genomic_DNA"/>
</dbReference>
<dbReference type="EMBL" id="AF415088">
    <property type="protein sequence ID" value="AAL17100.1"/>
    <property type="status" value="ALT_INIT"/>
    <property type="molecule type" value="Genomic_DNA"/>
</dbReference>
<dbReference type="EMBL" id="AF415090">
    <property type="protein sequence ID" value="AAL17101.1"/>
    <property type="status" value="ALT_INIT"/>
    <property type="molecule type" value="Genomic_DNA"/>
</dbReference>
<dbReference type="EMBL" id="AF415092">
    <property type="protein sequence ID" value="AAL17102.1"/>
    <property type="status" value="ALT_INIT"/>
    <property type="molecule type" value="Genomic_DNA"/>
</dbReference>
<dbReference type="EMBL" id="AF415094">
    <property type="protein sequence ID" value="AAL17103.1"/>
    <property type="status" value="ALT_INIT"/>
    <property type="molecule type" value="Genomic_DNA"/>
</dbReference>
<dbReference type="EMBL" id="AF415096">
    <property type="protein sequence ID" value="AAL17104.1"/>
    <property type="status" value="ALT_INIT"/>
    <property type="molecule type" value="Genomic_DNA"/>
</dbReference>
<dbReference type="EMBL" id="AF415098">
    <property type="protein sequence ID" value="AAL17105.1"/>
    <property type="status" value="ALT_INIT"/>
    <property type="molecule type" value="Genomic_DNA"/>
</dbReference>
<dbReference type="EMBL" id="AF415100">
    <property type="protein sequence ID" value="AAL17106.1"/>
    <property type="status" value="ALT_INIT"/>
    <property type="molecule type" value="Genomic_DNA"/>
</dbReference>
<dbReference type="EMBL" id="AF415102">
    <property type="protein sequence ID" value="AAL17107.1"/>
    <property type="status" value="ALT_INIT"/>
    <property type="molecule type" value="Genomic_DNA"/>
</dbReference>
<dbReference type="EMBL" id="AF415103">
    <property type="protein sequence ID" value="AAL17108.1"/>
    <property type="status" value="ALT_INIT"/>
    <property type="molecule type" value="Genomic_DNA"/>
</dbReference>
<dbReference type="EMBL" id="AF415104">
    <property type="protein sequence ID" value="AAL17109.1"/>
    <property type="status" value="ALT_INIT"/>
    <property type="molecule type" value="Genomic_DNA"/>
</dbReference>
<dbReference type="EMBL" id="AF415106">
    <property type="protein sequence ID" value="AAL17110.1"/>
    <property type="status" value="ALT_INIT"/>
    <property type="molecule type" value="Genomic_DNA"/>
</dbReference>
<dbReference type="EMBL" id="AF415107">
    <property type="protein sequence ID" value="AAL17111.1"/>
    <property type="status" value="ALT_INIT"/>
    <property type="molecule type" value="Genomic_DNA"/>
</dbReference>
<dbReference type="EMBL" id="AF415109">
    <property type="protein sequence ID" value="AAL17112.1"/>
    <property type="status" value="ALT_INIT"/>
    <property type="molecule type" value="Genomic_DNA"/>
</dbReference>
<dbReference type="EMBL" id="AF415110">
    <property type="protein sequence ID" value="AAL17113.1"/>
    <property type="status" value="ALT_INIT"/>
    <property type="molecule type" value="Genomic_DNA"/>
</dbReference>
<dbReference type="EMBL" id="AF415111">
    <property type="protein sequence ID" value="AAL17114.1"/>
    <property type="status" value="ALT_INIT"/>
    <property type="molecule type" value="Genomic_DNA"/>
</dbReference>
<dbReference type="EMBL" id="AF415113">
    <property type="protein sequence ID" value="AAL17115.1"/>
    <property type="status" value="ALT_INIT"/>
    <property type="molecule type" value="Genomic_DNA"/>
</dbReference>
<dbReference type="EMBL" id="AF415114">
    <property type="protein sequence ID" value="AAL17116.1"/>
    <property type="status" value="ALT_INIT"/>
    <property type="molecule type" value="Genomic_DNA"/>
</dbReference>
<dbReference type="EMBL" id="AF415116">
    <property type="protein sequence ID" value="AAL17117.1"/>
    <property type="status" value="ALT_INIT"/>
    <property type="molecule type" value="Genomic_DNA"/>
</dbReference>
<dbReference type="EMBL" id="AF415117">
    <property type="protein sequence ID" value="AAL17118.1"/>
    <property type="status" value="ALT_INIT"/>
    <property type="molecule type" value="Genomic_DNA"/>
</dbReference>
<dbReference type="EMBL" id="AF415118">
    <property type="protein sequence ID" value="AAL17119.1"/>
    <property type="status" value="ALT_INIT"/>
    <property type="molecule type" value="Genomic_DNA"/>
</dbReference>
<dbReference type="EMBL" id="AF415119">
    <property type="protein sequence ID" value="AAL17120.1"/>
    <property type="status" value="ALT_INIT"/>
    <property type="molecule type" value="Genomic_DNA"/>
</dbReference>
<dbReference type="EMBL" id="AF415120">
    <property type="protein sequence ID" value="AAL17121.1"/>
    <property type="status" value="ALT_INIT"/>
    <property type="molecule type" value="Genomic_DNA"/>
</dbReference>
<dbReference type="EMBL" id="AF415122">
    <property type="protein sequence ID" value="AAL17122.1"/>
    <property type="status" value="ALT_INIT"/>
    <property type="molecule type" value="Genomic_DNA"/>
</dbReference>
<dbReference type="EMBL" id="AF415123">
    <property type="protein sequence ID" value="AAL17123.1"/>
    <property type="status" value="ALT_INIT"/>
    <property type="molecule type" value="Genomic_DNA"/>
</dbReference>
<dbReference type="EMBL" id="AF415124">
    <property type="protein sequence ID" value="AAL17124.1"/>
    <property type="status" value="ALT_INIT"/>
    <property type="molecule type" value="Genomic_DNA"/>
</dbReference>
<dbReference type="EMBL" id="AF415126">
    <property type="protein sequence ID" value="AAL17125.1"/>
    <property type="status" value="ALT_INIT"/>
    <property type="molecule type" value="Genomic_DNA"/>
</dbReference>
<dbReference type="EMBL" id="AF415128">
    <property type="protein sequence ID" value="AAL17126.1"/>
    <property type="status" value="ALT_INIT"/>
    <property type="molecule type" value="Genomic_DNA"/>
</dbReference>
<dbReference type="EMBL" id="AF415130">
    <property type="protein sequence ID" value="AAL17127.1"/>
    <property type="status" value="ALT_INIT"/>
    <property type="molecule type" value="Genomic_DNA"/>
</dbReference>
<dbReference type="EMBL" id="AF415131">
    <property type="protein sequence ID" value="AAL17128.1"/>
    <property type="status" value="ALT_INIT"/>
    <property type="molecule type" value="Genomic_DNA"/>
</dbReference>
<dbReference type="EMBL" id="AF415132">
    <property type="protein sequence ID" value="AAL17129.1"/>
    <property type="status" value="ALT_INIT"/>
    <property type="molecule type" value="Genomic_DNA"/>
</dbReference>
<dbReference type="EMBL" id="AF415134">
    <property type="protein sequence ID" value="AAL17130.1"/>
    <property type="status" value="ALT_INIT"/>
    <property type="molecule type" value="Genomic_DNA"/>
</dbReference>
<dbReference type="EMBL" id="AF415135">
    <property type="protein sequence ID" value="AAL17131.1"/>
    <property type="status" value="ALT_INIT"/>
    <property type="molecule type" value="Genomic_DNA"/>
</dbReference>
<dbReference type="EMBL" id="AF415136">
    <property type="protein sequence ID" value="AAL17132.1"/>
    <property type="status" value="ALT_INIT"/>
    <property type="molecule type" value="Genomic_DNA"/>
</dbReference>
<dbReference type="EMBL" id="AF415137">
    <property type="protein sequence ID" value="AAL17133.1"/>
    <property type="status" value="ALT_INIT"/>
    <property type="molecule type" value="Genomic_DNA"/>
</dbReference>
<dbReference type="EMBL" id="AF415138">
    <property type="protein sequence ID" value="AAL17134.1"/>
    <property type="status" value="ALT_INIT"/>
    <property type="molecule type" value="Genomic_DNA"/>
</dbReference>
<dbReference type="EMBL" id="AF415139">
    <property type="protein sequence ID" value="AAL17135.1"/>
    <property type="status" value="ALT_INIT"/>
    <property type="molecule type" value="Genomic_DNA"/>
</dbReference>
<dbReference type="EMBL" id="AF415141">
    <property type="protein sequence ID" value="AAL17136.1"/>
    <property type="status" value="ALT_INIT"/>
    <property type="molecule type" value="Genomic_DNA"/>
</dbReference>
<dbReference type="EMBL" id="AF415142">
    <property type="protein sequence ID" value="AAL17137.1"/>
    <property type="status" value="ALT_INIT"/>
    <property type="molecule type" value="Genomic_DNA"/>
</dbReference>
<dbReference type="EMBL" id="AF415143">
    <property type="protein sequence ID" value="AAL17138.1"/>
    <property type="status" value="ALT_INIT"/>
    <property type="molecule type" value="Genomic_DNA"/>
</dbReference>
<dbReference type="EMBL" id="AF415144">
    <property type="protein sequence ID" value="AAL17139.1"/>
    <property type="status" value="ALT_INIT"/>
    <property type="molecule type" value="Genomic_DNA"/>
</dbReference>
<dbReference type="EMBL" id="AF415145">
    <property type="protein sequence ID" value="AAL17140.1"/>
    <property type="status" value="ALT_INIT"/>
    <property type="molecule type" value="Genomic_DNA"/>
</dbReference>
<dbReference type="EMBL" id="AF415146">
    <property type="protein sequence ID" value="AAL17141.1"/>
    <property type="status" value="ALT_INIT"/>
    <property type="molecule type" value="Genomic_DNA"/>
</dbReference>
<dbReference type="EMBL" id="AF415147">
    <property type="protein sequence ID" value="AAL17142.1"/>
    <property type="status" value="ALT_INIT"/>
    <property type="molecule type" value="Genomic_DNA"/>
</dbReference>
<dbReference type="EMBL" id="AF415149">
    <property type="protein sequence ID" value="AAL17143.1"/>
    <property type="status" value="ALT_INIT"/>
    <property type="molecule type" value="Genomic_DNA"/>
</dbReference>
<dbReference type="EMBL" id="AF415150">
    <property type="protein sequence ID" value="AAL17144.1"/>
    <property type="status" value="ALT_INIT"/>
    <property type="molecule type" value="Genomic_DNA"/>
</dbReference>
<dbReference type="EMBL" id="AF415151">
    <property type="protein sequence ID" value="AAL17145.1"/>
    <property type="status" value="ALT_INIT"/>
    <property type="molecule type" value="Genomic_DNA"/>
</dbReference>
<dbReference type="EMBL" id="AF415152">
    <property type="protein sequence ID" value="AAL17146.1"/>
    <property type="status" value="ALT_INIT"/>
    <property type="molecule type" value="Genomic_DNA"/>
</dbReference>
<dbReference type="EMBL" id="AF415154">
    <property type="protein sequence ID" value="AAL17147.1"/>
    <property type="status" value="ALT_INIT"/>
    <property type="molecule type" value="Genomic_DNA"/>
</dbReference>
<dbReference type="EMBL" id="AF377721">
    <property type="protein sequence ID" value="AAK60233.1"/>
    <property type="status" value="ALT_INIT"/>
    <property type="molecule type" value="Genomic_DNA"/>
</dbReference>
<dbReference type="EMBL" id="AF377722">
    <property type="protein sequence ID" value="AAK60234.1"/>
    <property type="status" value="ALT_INIT"/>
    <property type="molecule type" value="Genomic_DNA"/>
</dbReference>
<dbReference type="EMBL" id="AF377723">
    <property type="protein sequence ID" value="AAK60235.1"/>
    <property type="status" value="ALT_INIT"/>
    <property type="molecule type" value="Genomic_DNA"/>
</dbReference>
<dbReference type="EMBL" id="AF377724">
    <property type="protein sequence ID" value="AAK60236.1"/>
    <property type="status" value="ALT_INIT"/>
    <property type="molecule type" value="Genomic_DNA"/>
</dbReference>
<dbReference type="EMBL" id="AF377725">
    <property type="protein sequence ID" value="AAK60237.1"/>
    <property type="status" value="ALT_INIT"/>
    <property type="molecule type" value="Genomic_DNA"/>
</dbReference>
<dbReference type="EMBL" id="AF377726">
    <property type="protein sequence ID" value="AAK60238.1"/>
    <property type="status" value="ALT_INIT"/>
    <property type="molecule type" value="Genomic_DNA"/>
</dbReference>
<dbReference type="EMBL" id="AF377727">
    <property type="protein sequence ID" value="AAK60239.1"/>
    <property type="status" value="ALT_INIT"/>
    <property type="molecule type" value="Genomic_DNA"/>
</dbReference>
<dbReference type="EMBL" id="AF377728">
    <property type="protein sequence ID" value="AAK60240.1"/>
    <property type="status" value="ALT_INIT"/>
    <property type="molecule type" value="Genomic_DNA"/>
</dbReference>
<dbReference type="EMBL" id="AF377729">
    <property type="protein sequence ID" value="AAK60241.1"/>
    <property type="status" value="ALT_INIT"/>
    <property type="molecule type" value="Genomic_DNA"/>
</dbReference>
<dbReference type="EMBL" id="AF377730">
    <property type="protein sequence ID" value="AAK60242.1"/>
    <property type="status" value="ALT_INIT"/>
    <property type="molecule type" value="Genomic_DNA"/>
</dbReference>
<dbReference type="EMBL" id="AF377731">
    <property type="protein sequence ID" value="AAK60243.1"/>
    <property type="status" value="ALT_INIT"/>
    <property type="molecule type" value="Genomic_DNA"/>
</dbReference>
<dbReference type="EMBL" id="AF377732">
    <property type="protein sequence ID" value="AAK60244.1"/>
    <property type="status" value="ALT_INIT"/>
    <property type="molecule type" value="Genomic_DNA"/>
</dbReference>
<dbReference type="EMBL" id="AF377733">
    <property type="protein sequence ID" value="AAK60245.1"/>
    <property type="status" value="ALT_INIT"/>
    <property type="molecule type" value="Genomic_DNA"/>
</dbReference>
<dbReference type="EMBL" id="AF377734">
    <property type="protein sequence ID" value="AAK60246.1"/>
    <property type="status" value="ALT_INIT"/>
    <property type="molecule type" value="Genomic_DNA"/>
</dbReference>
<dbReference type="EMBL" id="AF377735">
    <property type="protein sequence ID" value="AAK60247.1"/>
    <property type="status" value="ALT_INIT"/>
    <property type="molecule type" value="Genomic_DNA"/>
</dbReference>
<dbReference type="EMBL" id="AF377736">
    <property type="protein sequence ID" value="AAK60248.1"/>
    <property type="status" value="ALT_INIT"/>
    <property type="molecule type" value="Genomic_DNA"/>
</dbReference>
<dbReference type="EMBL" id="AF377737">
    <property type="protein sequence ID" value="AAK60249.1"/>
    <property type="status" value="ALT_INIT"/>
    <property type="molecule type" value="Genomic_DNA"/>
</dbReference>
<dbReference type="EMBL" id="AF377738">
    <property type="protein sequence ID" value="AAK60250.1"/>
    <property type="status" value="ALT_INIT"/>
    <property type="molecule type" value="Genomic_DNA"/>
</dbReference>
<dbReference type="EMBL" id="AF377739">
    <property type="protein sequence ID" value="AAK60251.1"/>
    <property type="status" value="ALT_INIT"/>
    <property type="molecule type" value="Genomic_DNA"/>
</dbReference>
<dbReference type="EMBL" id="AF377740">
    <property type="protein sequence ID" value="AAK60252.1"/>
    <property type="status" value="ALT_INIT"/>
    <property type="molecule type" value="Genomic_DNA"/>
</dbReference>
<dbReference type="EMBL" id="AF377741">
    <property type="protein sequence ID" value="AAK60253.1"/>
    <property type="status" value="ALT_INIT"/>
    <property type="molecule type" value="Genomic_DNA"/>
</dbReference>
<dbReference type="EMBL" id="AF377742">
    <property type="protein sequence ID" value="AAK60254.1"/>
    <property type="status" value="ALT_INIT"/>
    <property type="molecule type" value="Genomic_DNA"/>
</dbReference>
<dbReference type="EMBL" id="AF377743">
    <property type="protein sequence ID" value="AAK60255.1"/>
    <property type="status" value="ALT_INIT"/>
    <property type="molecule type" value="Genomic_DNA"/>
</dbReference>
<dbReference type="EMBL" id="AF340199">
    <property type="protein sequence ID" value="AAK30113.1"/>
    <property type="molecule type" value="Genomic_DNA"/>
</dbReference>
<dbReference type="EMBL" id="AF340200">
    <property type="protein sequence ID" value="AAK30114.1"/>
    <property type="molecule type" value="Genomic_DNA"/>
</dbReference>
<dbReference type="EMBL" id="AF340201">
    <property type="protein sequence ID" value="AAK30115.1"/>
    <property type="molecule type" value="Genomic_DNA"/>
</dbReference>
<dbReference type="EMBL" id="AF340202">
    <property type="protein sequence ID" value="AAK30116.1"/>
    <property type="molecule type" value="Genomic_DNA"/>
</dbReference>
<dbReference type="EMBL" id="AF340203">
    <property type="protein sequence ID" value="AAK30117.1"/>
    <property type="molecule type" value="Genomic_DNA"/>
</dbReference>
<dbReference type="EMBL" id="AF340204">
    <property type="protein sequence ID" value="AAK30118.1"/>
    <property type="molecule type" value="Genomic_DNA"/>
</dbReference>
<dbReference type="EMBL" id="AF340205">
    <property type="protein sequence ID" value="AAK30119.1"/>
    <property type="molecule type" value="Genomic_DNA"/>
</dbReference>
<dbReference type="EMBL" id="AF340206">
    <property type="protein sequence ID" value="AAK30120.1"/>
    <property type="molecule type" value="Genomic_DNA"/>
</dbReference>
<dbReference type="EMBL" id="AF340207">
    <property type="protein sequence ID" value="AAK30121.1"/>
    <property type="molecule type" value="Genomic_DNA"/>
</dbReference>
<dbReference type="EMBL" id="AF340208">
    <property type="protein sequence ID" value="AAK30122.1"/>
    <property type="molecule type" value="Genomic_DNA"/>
</dbReference>
<dbReference type="EMBL" id="AF340209">
    <property type="protein sequence ID" value="AAK30123.1"/>
    <property type="molecule type" value="Genomic_DNA"/>
</dbReference>
<dbReference type="EMBL" id="AF340210">
    <property type="protein sequence ID" value="AAK30124.1"/>
    <property type="molecule type" value="Genomic_DNA"/>
</dbReference>
<dbReference type="PIR" id="T04347">
    <property type="entry name" value="T04347"/>
</dbReference>
<dbReference type="RefSeq" id="XP_008665277.1">
    <property type="nucleotide sequence ID" value="XM_008667055.1"/>
</dbReference>
<dbReference type="SMR" id="Q93WI2"/>
<dbReference type="FunCoup" id="Q93WI2">
    <property type="interactions" value="300"/>
</dbReference>
<dbReference type="IntAct" id="Q93WI2">
    <property type="interactions" value="2"/>
</dbReference>
<dbReference type="STRING" id="4577.Q93WI2"/>
<dbReference type="PaxDb" id="4577-AC233950.1_FGP002"/>
<dbReference type="EnsemblPlants" id="Zm00001eb054440_T001">
    <property type="protein sequence ID" value="Zm00001eb054440_P001"/>
    <property type="gene ID" value="Zm00001eb054440"/>
</dbReference>
<dbReference type="Gramene" id="Zm00001eb054440_T001">
    <property type="protein sequence ID" value="Zm00001eb054440_P001"/>
    <property type="gene ID" value="Zm00001eb054440"/>
</dbReference>
<dbReference type="MaizeGDB" id="716014"/>
<dbReference type="eggNOG" id="ENOG502QUQ6">
    <property type="taxonomic scope" value="Eukaryota"/>
</dbReference>
<dbReference type="HOGENOM" id="CLU_058710_0_0_1"/>
<dbReference type="InParanoid" id="Q93WI2"/>
<dbReference type="OrthoDB" id="1896834at2759"/>
<dbReference type="Proteomes" id="UP000007305">
    <property type="component" value="Chromosome 1"/>
</dbReference>
<dbReference type="ExpressionAtlas" id="Q93WI2">
    <property type="expression patterns" value="baseline and differential"/>
</dbReference>
<dbReference type="GO" id="GO:0005634">
    <property type="term" value="C:nucleus"/>
    <property type="evidence" value="ECO:0000318"/>
    <property type="project" value="GO_Central"/>
</dbReference>
<dbReference type="GO" id="GO:0003700">
    <property type="term" value="F:DNA-binding transcription factor activity"/>
    <property type="evidence" value="ECO:0000318"/>
    <property type="project" value="GO_Central"/>
</dbReference>
<dbReference type="GO" id="GO:0043565">
    <property type="term" value="F:sequence-specific DNA binding"/>
    <property type="evidence" value="ECO:0000318"/>
    <property type="project" value="GO_Central"/>
</dbReference>
<dbReference type="GO" id="GO:2000032">
    <property type="term" value="P:regulation of secondary shoot formation"/>
    <property type="evidence" value="ECO:0000318"/>
    <property type="project" value="GO_Central"/>
</dbReference>
<dbReference type="InterPro" id="IPR017888">
    <property type="entry name" value="CYC/TB1_R_domain"/>
</dbReference>
<dbReference type="InterPro" id="IPR017887">
    <property type="entry name" value="TF_TCP_subgr"/>
</dbReference>
<dbReference type="InterPro" id="IPR005333">
    <property type="entry name" value="Transcription_factor_TCP"/>
</dbReference>
<dbReference type="PANTHER" id="PTHR31072:SF226">
    <property type="entry name" value="TRANSCRIPTION FACTOR TCP18"/>
    <property type="match status" value="1"/>
</dbReference>
<dbReference type="PANTHER" id="PTHR31072">
    <property type="entry name" value="TRANSCRIPTION FACTOR TCP4-RELATED"/>
    <property type="match status" value="1"/>
</dbReference>
<dbReference type="Pfam" id="PF03634">
    <property type="entry name" value="TCP"/>
    <property type="match status" value="1"/>
</dbReference>
<dbReference type="PROSITE" id="PS51370">
    <property type="entry name" value="R"/>
    <property type="match status" value="1"/>
</dbReference>
<dbReference type="PROSITE" id="PS51369">
    <property type="entry name" value="TCP"/>
    <property type="match status" value="1"/>
</dbReference>
<protein>
    <recommendedName>
        <fullName>Transcription factor TEOSINTE BRANCHED 1</fullName>
    </recommendedName>
</protein>
<name>TB1_MAIZE</name>